<protein>
    <recommendedName>
        <fullName evidence="1">Catalase-peroxidase 1</fullName>
        <shortName evidence="1">CP 1</shortName>
        <ecNumber evidence="1">1.11.1.21</ecNumber>
    </recommendedName>
    <alternativeName>
        <fullName evidence="1">Peroxidase/catalase 1</fullName>
    </alternativeName>
</protein>
<sequence>MTQQNAHSEGKCPVMHGSMTTNNRTEKNWWPKSLNLDILHQHDAKTNPMPSDFDYQEEVKKLDFSALKQDLIALMTDSQEWWPADWGHYGGLMIRMSWHAAGTYRIADGRGGAGTGNLRFAPLNSWPDNANLDKARRILWPIKKKYGNQLSWADLIAYAGTMAYESMGLKTFGFGFGREDIWHPEKDIYWGSEKEWLAPTNNPNSRYSGERDLENPLAAVMMGLIYVNPEGVDGQPDPLKTAHDVRVTFARMAMNDEETVALTAGGHTVGKAHGNGDAANLGPEPEGADIHDQGLGWLNKTTRGVGNNAVTSGIEGAWTSQPTQWDNGYFHLLLNYDWELKKSPAGAWQWEPIDIKEEDKPVDPENPNVRHNPIMTDADMAMKMDPEYRKISERFHSDPAYFADTFARAWFKLTHRDMGPKARYIGPDVPQEDLIWQDPVPNGNANYDIDAVKAKIAASGLSVSDMVTTAWDSARTFRQSDKRGGANGARVRLAPQKDWQGNEPERLARVLPVLENIAKDTGASVADVVVLAGNVGIEQAASAAGVNVTVPFLPGRGDATQEMTDVESFEVLEPLHDGYRNWLKQNYVVTPEEMLLDRTQLMGLTAAEMTVLVGGMRVLGTNHGGSKHGVFTDRVGQLTNDFFINLTDMKYTWEPVGENLYEIRSRRSKDVKWTATRVDLVFGSNSILRAYAELYAQDDNAGKFVEDFVAAWTKVMNADRF</sequence>
<accession>Q87J02</accession>
<comment type="function">
    <text evidence="1">Bifunctional enzyme with both catalase and broad-spectrum peroxidase activity.</text>
</comment>
<comment type="catalytic activity">
    <reaction evidence="1">
        <text>H2O2 + AH2 = A + 2 H2O</text>
        <dbReference type="Rhea" id="RHEA:30275"/>
        <dbReference type="ChEBI" id="CHEBI:13193"/>
        <dbReference type="ChEBI" id="CHEBI:15377"/>
        <dbReference type="ChEBI" id="CHEBI:16240"/>
        <dbReference type="ChEBI" id="CHEBI:17499"/>
        <dbReference type="EC" id="1.11.1.21"/>
    </reaction>
</comment>
<comment type="catalytic activity">
    <reaction evidence="1">
        <text>2 H2O2 = O2 + 2 H2O</text>
        <dbReference type="Rhea" id="RHEA:20309"/>
        <dbReference type="ChEBI" id="CHEBI:15377"/>
        <dbReference type="ChEBI" id="CHEBI:15379"/>
        <dbReference type="ChEBI" id="CHEBI:16240"/>
        <dbReference type="EC" id="1.11.1.21"/>
    </reaction>
</comment>
<comment type="cofactor">
    <cofactor evidence="1">
        <name>heme b</name>
        <dbReference type="ChEBI" id="CHEBI:60344"/>
    </cofactor>
    <text evidence="1">Binds 1 heme b (iron(II)-protoporphyrin IX) group per dimer.</text>
</comment>
<comment type="subunit">
    <text evidence="1">Homodimer or homotetramer.</text>
</comment>
<comment type="PTM">
    <text evidence="1">Formation of the three residue Trp-Tyr-Met cross-link is important for the catalase, but not the peroxidase activity of the enzyme.</text>
</comment>
<comment type="similarity">
    <text evidence="1">Belongs to the peroxidase family. Peroxidase/catalase subfamily.</text>
</comment>
<reference key="1">
    <citation type="journal article" date="2003" name="Lancet">
        <title>Genome sequence of Vibrio parahaemolyticus: a pathogenic mechanism distinct from that of V. cholerae.</title>
        <authorList>
            <person name="Makino K."/>
            <person name="Oshima K."/>
            <person name="Kurokawa K."/>
            <person name="Yokoyama K."/>
            <person name="Uda T."/>
            <person name="Tagomori K."/>
            <person name="Iijima Y."/>
            <person name="Najima M."/>
            <person name="Nakano M."/>
            <person name="Yamashita A."/>
            <person name="Kubota Y."/>
            <person name="Kimura S."/>
            <person name="Yasunaga T."/>
            <person name="Honda T."/>
            <person name="Shinagawa H."/>
            <person name="Hattori M."/>
            <person name="Iida T."/>
        </authorList>
    </citation>
    <scope>NUCLEOTIDE SEQUENCE [LARGE SCALE GENOMIC DNA]</scope>
    <source>
        <strain>RIMD 2210633</strain>
    </source>
</reference>
<evidence type="ECO:0000255" key="1">
    <source>
        <dbReference type="HAMAP-Rule" id="MF_01961"/>
    </source>
</evidence>
<gene>
    <name evidence="1" type="primary">katG1</name>
    <name type="ordered locus">VPA0453</name>
</gene>
<organism>
    <name type="scientific">Vibrio parahaemolyticus serotype O3:K6 (strain RIMD 2210633)</name>
    <dbReference type="NCBI Taxonomy" id="223926"/>
    <lineage>
        <taxon>Bacteria</taxon>
        <taxon>Pseudomonadati</taxon>
        <taxon>Pseudomonadota</taxon>
        <taxon>Gammaproteobacteria</taxon>
        <taxon>Vibrionales</taxon>
        <taxon>Vibrionaceae</taxon>
        <taxon>Vibrio</taxon>
    </lineage>
</organism>
<feature type="chain" id="PRO_0000354950" description="Catalase-peroxidase 1">
    <location>
        <begin position="1"/>
        <end position="721"/>
    </location>
</feature>
<feature type="active site" description="Proton acceptor" evidence="1">
    <location>
        <position position="99"/>
    </location>
</feature>
<feature type="binding site" description="axial binding residue" evidence="1">
    <location>
        <position position="267"/>
    </location>
    <ligand>
        <name>heme b</name>
        <dbReference type="ChEBI" id="CHEBI:60344"/>
    </ligand>
    <ligandPart>
        <name>Fe</name>
        <dbReference type="ChEBI" id="CHEBI:18248"/>
    </ligandPart>
</feature>
<feature type="site" description="Transition state stabilizer" evidence="1">
    <location>
        <position position="95"/>
    </location>
</feature>
<feature type="cross-link" description="Tryptophyl-tyrosyl-methioninium (Trp-Tyr) (with M-252)" evidence="1">
    <location>
        <begin position="98"/>
        <end position="226"/>
    </location>
</feature>
<feature type="cross-link" description="Tryptophyl-tyrosyl-methioninium (Tyr-Met) (with W-98)" evidence="1">
    <location>
        <begin position="226"/>
        <end position="252"/>
    </location>
</feature>
<proteinExistence type="inferred from homology"/>
<dbReference type="EC" id="1.11.1.21" evidence="1"/>
<dbReference type="EMBL" id="BA000032">
    <property type="protein sequence ID" value="BAC61796.1"/>
    <property type="molecule type" value="Genomic_DNA"/>
</dbReference>
<dbReference type="RefSeq" id="NP_799963.1">
    <property type="nucleotide sequence ID" value="NC_004605.1"/>
</dbReference>
<dbReference type="SMR" id="Q87J02"/>
<dbReference type="PeroxiBase" id="2655">
    <property type="entry name" value="VpCP01_RIMD2210633"/>
</dbReference>
<dbReference type="GeneID" id="1191141"/>
<dbReference type="KEGG" id="vpa:VPA0453"/>
<dbReference type="PATRIC" id="fig|223926.6.peg.3393"/>
<dbReference type="eggNOG" id="COG0376">
    <property type="taxonomic scope" value="Bacteria"/>
</dbReference>
<dbReference type="HOGENOM" id="CLU_025424_2_0_6"/>
<dbReference type="Proteomes" id="UP000002493">
    <property type="component" value="Chromosome 2"/>
</dbReference>
<dbReference type="GO" id="GO:0005829">
    <property type="term" value="C:cytosol"/>
    <property type="evidence" value="ECO:0007669"/>
    <property type="project" value="TreeGrafter"/>
</dbReference>
<dbReference type="GO" id="GO:0004096">
    <property type="term" value="F:catalase activity"/>
    <property type="evidence" value="ECO:0007669"/>
    <property type="project" value="UniProtKB-UniRule"/>
</dbReference>
<dbReference type="GO" id="GO:0020037">
    <property type="term" value="F:heme binding"/>
    <property type="evidence" value="ECO:0007669"/>
    <property type="project" value="InterPro"/>
</dbReference>
<dbReference type="GO" id="GO:0046872">
    <property type="term" value="F:metal ion binding"/>
    <property type="evidence" value="ECO:0007669"/>
    <property type="project" value="UniProtKB-KW"/>
</dbReference>
<dbReference type="GO" id="GO:0070301">
    <property type="term" value="P:cellular response to hydrogen peroxide"/>
    <property type="evidence" value="ECO:0007669"/>
    <property type="project" value="TreeGrafter"/>
</dbReference>
<dbReference type="GO" id="GO:0042744">
    <property type="term" value="P:hydrogen peroxide catabolic process"/>
    <property type="evidence" value="ECO:0007669"/>
    <property type="project" value="UniProtKB-KW"/>
</dbReference>
<dbReference type="CDD" id="cd00649">
    <property type="entry name" value="catalase_peroxidase_1"/>
    <property type="match status" value="1"/>
</dbReference>
<dbReference type="CDD" id="cd08200">
    <property type="entry name" value="catalase_peroxidase_2"/>
    <property type="match status" value="1"/>
</dbReference>
<dbReference type="FunFam" id="1.10.420.10:FF:000002">
    <property type="entry name" value="Catalase-peroxidase"/>
    <property type="match status" value="1"/>
</dbReference>
<dbReference type="FunFam" id="1.10.420.10:FF:000004">
    <property type="entry name" value="Catalase-peroxidase"/>
    <property type="match status" value="1"/>
</dbReference>
<dbReference type="FunFam" id="1.10.520.10:FF:000002">
    <property type="entry name" value="Catalase-peroxidase"/>
    <property type="match status" value="1"/>
</dbReference>
<dbReference type="Gene3D" id="1.10.520.10">
    <property type="match status" value="2"/>
</dbReference>
<dbReference type="Gene3D" id="1.10.420.10">
    <property type="entry name" value="Peroxidase, domain 2"/>
    <property type="match status" value="2"/>
</dbReference>
<dbReference type="HAMAP" id="MF_01961">
    <property type="entry name" value="Catal_peroxid"/>
    <property type="match status" value="1"/>
</dbReference>
<dbReference type="InterPro" id="IPR000763">
    <property type="entry name" value="Catalase_peroxidase"/>
</dbReference>
<dbReference type="InterPro" id="IPR002016">
    <property type="entry name" value="Haem_peroxidase"/>
</dbReference>
<dbReference type="InterPro" id="IPR010255">
    <property type="entry name" value="Haem_peroxidase_sf"/>
</dbReference>
<dbReference type="InterPro" id="IPR019794">
    <property type="entry name" value="Peroxidases_AS"/>
</dbReference>
<dbReference type="NCBIfam" id="TIGR00198">
    <property type="entry name" value="cat_per_HPI"/>
    <property type="match status" value="1"/>
</dbReference>
<dbReference type="NCBIfam" id="NF011635">
    <property type="entry name" value="PRK15061.1"/>
    <property type="match status" value="1"/>
</dbReference>
<dbReference type="PANTHER" id="PTHR30555:SF6">
    <property type="entry name" value="CATALASE-PEROXIDASE"/>
    <property type="match status" value="1"/>
</dbReference>
<dbReference type="PANTHER" id="PTHR30555">
    <property type="entry name" value="HYDROPEROXIDASE I, BIFUNCTIONAL CATALASE-PEROXIDASE"/>
    <property type="match status" value="1"/>
</dbReference>
<dbReference type="Pfam" id="PF00141">
    <property type="entry name" value="peroxidase"/>
    <property type="match status" value="2"/>
</dbReference>
<dbReference type="PRINTS" id="PR00460">
    <property type="entry name" value="BPEROXIDASE"/>
</dbReference>
<dbReference type="PRINTS" id="PR00458">
    <property type="entry name" value="PEROXIDASE"/>
</dbReference>
<dbReference type="SUPFAM" id="SSF48113">
    <property type="entry name" value="Heme-dependent peroxidases"/>
    <property type="match status" value="2"/>
</dbReference>
<dbReference type="PROSITE" id="PS00436">
    <property type="entry name" value="PEROXIDASE_2"/>
    <property type="match status" value="1"/>
</dbReference>
<dbReference type="PROSITE" id="PS50873">
    <property type="entry name" value="PEROXIDASE_4"/>
    <property type="match status" value="1"/>
</dbReference>
<name>KATG1_VIBPA</name>
<keyword id="KW-0349">Heme</keyword>
<keyword id="KW-0376">Hydrogen peroxide</keyword>
<keyword id="KW-0408">Iron</keyword>
<keyword id="KW-0479">Metal-binding</keyword>
<keyword id="KW-0560">Oxidoreductase</keyword>
<keyword id="KW-0575">Peroxidase</keyword>